<name>RL28_TREDE</name>
<accession>Q73P09</accession>
<sequence>MSRVCEICGKGSLSGNSVSKSKIHTKRVWKPNLVNVKTEIGGRTLTIKMCSRCLKSDYVTKKV</sequence>
<keyword id="KW-1185">Reference proteome</keyword>
<keyword id="KW-0687">Ribonucleoprotein</keyword>
<keyword id="KW-0689">Ribosomal protein</keyword>
<gene>
    <name evidence="1" type="primary">rpmB</name>
    <name type="ordered locus">TDE_0991</name>
</gene>
<reference key="1">
    <citation type="journal article" date="2004" name="Proc. Natl. Acad. Sci. U.S.A.">
        <title>Comparison of the genome of the oral pathogen Treponema denticola with other spirochete genomes.</title>
        <authorList>
            <person name="Seshadri R."/>
            <person name="Myers G.S.A."/>
            <person name="Tettelin H."/>
            <person name="Eisen J.A."/>
            <person name="Heidelberg J.F."/>
            <person name="Dodson R.J."/>
            <person name="Davidsen T.M."/>
            <person name="DeBoy R.T."/>
            <person name="Fouts D.E."/>
            <person name="Haft D.H."/>
            <person name="Selengut J."/>
            <person name="Ren Q."/>
            <person name="Brinkac L.M."/>
            <person name="Madupu R."/>
            <person name="Kolonay J.F."/>
            <person name="Durkin S.A."/>
            <person name="Daugherty S.C."/>
            <person name="Shetty J."/>
            <person name="Shvartsbeyn A."/>
            <person name="Gebregeorgis E."/>
            <person name="Geer K."/>
            <person name="Tsegaye G."/>
            <person name="Malek J.A."/>
            <person name="Ayodeji B."/>
            <person name="Shatsman S."/>
            <person name="McLeod M.P."/>
            <person name="Smajs D."/>
            <person name="Howell J.K."/>
            <person name="Pal S."/>
            <person name="Amin A."/>
            <person name="Vashisth P."/>
            <person name="McNeill T.Z."/>
            <person name="Xiang Q."/>
            <person name="Sodergren E."/>
            <person name="Baca E."/>
            <person name="Weinstock G.M."/>
            <person name="Norris S.J."/>
            <person name="Fraser C.M."/>
            <person name="Paulsen I.T."/>
        </authorList>
    </citation>
    <scope>NUCLEOTIDE SEQUENCE [LARGE SCALE GENOMIC DNA]</scope>
    <source>
        <strain>ATCC 35405 / DSM 14222 / CIP 103919 / JCM 8153 / KCTC 15104</strain>
    </source>
</reference>
<comment type="similarity">
    <text evidence="1">Belongs to the bacterial ribosomal protein bL28 family.</text>
</comment>
<dbReference type="EMBL" id="AE017226">
    <property type="protein sequence ID" value="AAS11481.1"/>
    <property type="molecule type" value="Genomic_DNA"/>
</dbReference>
<dbReference type="RefSeq" id="NP_971600.1">
    <property type="nucleotide sequence ID" value="NC_002967.9"/>
</dbReference>
<dbReference type="RefSeq" id="WP_002670427.1">
    <property type="nucleotide sequence ID" value="NC_002967.9"/>
</dbReference>
<dbReference type="SMR" id="Q73P09"/>
<dbReference type="STRING" id="243275.TDE_0991"/>
<dbReference type="PaxDb" id="243275-TDE_0991"/>
<dbReference type="GeneID" id="2739068"/>
<dbReference type="KEGG" id="tde:TDE_0991"/>
<dbReference type="PATRIC" id="fig|243275.7.peg.953"/>
<dbReference type="eggNOG" id="COG0227">
    <property type="taxonomic scope" value="Bacteria"/>
</dbReference>
<dbReference type="HOGENOM" id="CLU_064548_7_0_12"/>
<dbReference type="OrthoDB" id="9805609at2"/>
<dbReference type="Proteomes" id="UP000008212">
    <property type="component" value="Chromosome"/>
</dbReference>
<dbReference type="GO" id="GO:1990904">
    <property type="term" value="C:ribonucleoprotein complex"/>
    <property type="evidence" value="ECO:0007669"/>
    <property type="project" value="UniProtKB-KW"/>
</dbReference>
<dbReference type="GO" id="GO:0005840">
    <property type="term" value="C:ribosome"/>
    <property type="evidence" value="ECO:0007669"/>
    <property type="project" value="UniProtKB-KW"/>
</dbReference>
<dbReference type="GO" id="GO:0003735">
    <property type="term" value="F:structural constituent of ribosome"/>
    <property type="evidence" value="ECO:0007669"/>
    <property type="project" value="InterPro"/>
</dbReference>
<dbReference type="GO" id="GO:0006412">
    <property type="term" value="P:translation"/>
    <property type="evidence" value="ECO:0007669"/>
    <property type="project" value="UniProtKB-UniRule"/>
</dbReference>
<dbReference type="Gene3D" id="2.20.150.30">
    <property type="match status" value="1"/>
</dbReference>
<dbReference type="Gene3D" id="2.30.170.40">
    <property type="entry name" value="Ribosomal protein L28/L24"/>
    <property type="match status" value="1"/>
</dbReference>
<dbReference type="HAMAP" id="MF_00373">
    <property type="entry name" value="Ribosomal_bL28"/>
    <property type="match status" value="1"/>
</dbReference>
<dbReference type="InterPro" id="IPR050096">
    <property type="entry name" value="Bacterial_rp_bL28"/>
</dbReference>
<dbReference type="InterPro" id="IPR026569">
    <property type="entry name" value="Ribosomal_bL28"/>
</dbReference>
<dbReference type="InterPro" id="IPR034704">
    <property type="entry name" value="Ribosomal_bL28/bL31-like_sf"/>
</dbReference>
<dbReference type="InterPro" id="IPR001383">
    <property type="entry name" value="Ribosomal_bL28_bact-type"/>
</dbReference>
<dbReference type="InterPro" id="IPR037147">
    <property type="entry name" value="Ribosomal_bL28_sf"/>
</dbReference>
<dbReference type="NCBIfam" id="TIGR00009">
    <property type="entry name" value="L28"/>
    <property type="match status" value="1"/>
</dbReference>
<dbReference type="PANTHER" id="PTHR39080">
    <property type="entry name" value="50S RIBOSOMAL PROTEIN L28"/>
    <property type="match status" value="1"/>
</dbReference>
<dbReference type="PANTHER" id="PTHR39080:SF1">
    <property type="entry name" value="LARGE RIBOSOMAL SUBUNIT PROTEIN BL28A"/>
    <property type="match status" value="1"/>
</dbReference>
<dbReference type="Pfam" id="PF00830">
    <property type="entry name" value="Ribosomal_L28"/>
    <property type="match status" value="1"/>
</dbReference>
<dbReference type="SUPFAM" id="SSF143800">
    <property type="entry name" value="L28p-like"/>
    <property type="match status" value="1"/>
</dbReference>
<feature type="chain" id="PRO_0000178579" description="Large ribosomal subunit protein bL28">
    <location>
        <begin position="1"/>
        <end position="63"/>
    </location>
</feature>
<organism>
    <name type="scientific">Treponema denticola (strain ATCC 35405 / DSM 14222 / CIP 103919 / JCM 8153 / KCTC 15104)</name>
    <dbReference type="NCBI Taxonomy" id="243275"/>
    <lineage>
        <taxon>Bacteria</taxon>
        <taxon>Pseudomonadati</taxon>
        <taxon>Spirochaetota</taxon>
        <taxon>Spirochaetia</taxon>
        <taxon>Spirochaetales</taxon>
        <taxon>Treponemataceae</taxon>
        <taxon>Treponema</taxon>
    </lineage>
</organism>
<protein>
    <recommendedName>
        <fullName evidence="1">Large ribosomal subunit protein bL28</fullName>
    </recommendedName>
    <alternativeName>
        <fullName evidence="2">50S ribosomal protein L28</fullName>
    </alternativeName>
</protein>
<proteinExistence type="inferred from homology"/>
<evidence type="ECO:0000255" key="1">
    <source>
        <dbReference type="HAMAP-Rule" id="MF_00373"/>
    </source>
</evidence>
<evidence type="ECO:0000305" key="2"/>